<gene>
    <name evidence="1" type="primary">gatC</name>
    <name type="ordered locus">SUB1518</name>
</gene>
<accession>B9DVG7</accession>
<evidence type="ECO:0000255" key="1">
    <source>
        <dbReference type="HAMAP-Rule" id="MF_00122"/>
    </source>
</evidence>
<comment type="function">
    <text evidence="1">Allows the formation of correctly charged Asn-tRNA(Asn) or Gln-tRNA(Gln) through the transamidation of misacylated Asp-tRNA(Asn) or Glu-tRNA(Gln) in organisms which lack either or both of asparaginyl-tRNA or glutaminyl-tRNA synthetases. The reaction takes place in the presence of glutamine and ATP through an activated phospho-Asp-tRNA(Asn) or phospho-Glu-tRNA(Gln).</text>
</comment>
<comment type="catalytic activity">
    <reaction evidence="1">
        <text>L-glutamyl-tRNA(Gln) + L-glutamine + ATP + H2O = L-glutaminyl-tRNA(Gln) + L-glutamate + ADP + phosphate + H(+)</text>
        <dbReference type="Rhea" id="RHEA:17521"/>
        <dbReference type="Rhea" id="RHEA-COMP:9681"/>
        <dbReference type="Rhea" id="RHEA-COMP:9684"/>
        <dbReference type="ChEBI" id="CHEBI:15377"/>
        <dbReference type="ChEBI" id="CHEBI:15378"/>
        <dbReference type="ChEBI" id="CHEBI:29985"/>
        <dbReference type="ChEBI" id="CHEBI:30616"/>
        <dbReference type="ChEBI" id="CHEBI:43474"/>
        <dbReference type="ChEBI" id="CHEBI:58359"/>
        <dbReference type="ChEBI" id="CHEBI:78520"/>
        <dbReference type="ChEBI" id="CHEBI:78521"/>
        <dbReference type="ChEBI" id="CHEBI:456216"/>
    </reaction>
</comment>
<comment type="catalytic activity">
    <reaction evidence="1">
        <text>L-aspartyl-tRNA(Asn) + L-glutamine + ATP + H2O = L-asparaginyl-tRNA(Asn) + L-glutamate + ADP + phosphate + 2 H(+)</text>
        <dbReference type="Rhea" id="RHEA:14513"/>
        <dbReference type="Rhea" id="RHEA-COMP:9674"/>
        <dbReference type="Rhea" id="RHEA-COMP:9677"/>
        <dbReference type="ChEBI" id="CHEBI:15377"/>
        <dbReference type="ChEBI" id="CHEBI:15378"/>
        <dbReference type="ChEBI" id="CHEBI:29985"/>
        <dbReference type="ChEBI" id="CHEBI:30616"/>
        <dbReference type="ChEBI" id="CHEBI:43474"/>
        <dbReference type="ChEBI" id="CHEBI:58359"/>
        <dbReference type="ChEBI" id="CHEBI:78515"/>
        <dbReference type="ChEBI" id="CHEBI:78516"/>
        <dbReference type="ChEBI" id="CHEBI:456216"/>
    </reaction>
</comment>
<comment type="subunit">
    <text evidence="1">Heterotrimer of A, B and C subunits.</text>
</comment>
<comment type="similarity">
    <text evidence="1">Belongs to the GatC family.</text>
</comment>
<sequence length="100" mass="11098">MKISEEEVRHVATLSKLAFSEEETSQFATTLTKIVDMVELLNEVDTEGVAITTTMADRKNVMRPDLAQAGTNREDLFKNVPEKENNFIKVPAILEDGGDA</sequence>
<dbReference type="EC" id="6.3.5.-" evidence="1"/>
<dbReference type="EMBL" id="AM946015">
    <property type="protein sequence ID" value="CAR43254.1"/>
    <property type="molecule type" value="Genomic_DNA"/>
</dbReference>
<dbReference type="RefSeq" id="WP_015911827.1">
    <property type="nucleotide sequence ID" value="NC_012004.1"/>
</dbReference>
<dbReference type="SMR" id="B9DVG7"/>
<dbReference type="STRING" id="218495.SUB1518"/>
<dbReference type="GeneID" id="93826836"/>
<dbReference type="KEGG" id="sub:SUB1518"/>
<dbReference type="eggNOG" id="COG0721">
    <property type="taxonomic scope" value="Bacteria"/>
</dbReference>
<dbReference type="HOGENOM" id="CLU_105899_1_2_9"/>
<dbReference type="OrthoDB" id="9813938at2"/>
<dbReference type="Proteomes" id="UP000000449">
    <property type="component" value="Chromosome"/>
</dbReference>
<dbReference type="GO" id="GO:0050566">
    <property type="term" value="F:asparaginyl-tRNA synthase (glutamine-hydrolyzing) activity"/>
    <property type="evidence" value="ECO:0007669"/>
    <property type="project" value="RHEA"/>
</dbReference>
<dbReference type="GO" id="GO:0005524">
    <property type="term" value="F:ATP binding"/>
    <property type="evidence" value="ECO:0007669"/>
    <property type="project" value="UniProtKB-KW"/>
</dbReference>
<dbReference type="GO" id="GO:0050567">
    <property type="term" value="F:glutaminyl-tRNA synthase (glutamine-hydrolyzing) activity"/>
    <property type="evidence" value="ECO:0007669"/>
    <property type="project" value="UniProtKB-UniRule"/>
</dbReference>
<dbReference type="GO" id="GO:0070681">
    <property type="term" value="P:glutaminyl-tRNAGln biosynthesis via transamidation"/>
    <property type="evidence" value="ECO:0007669"/>
    <property type="project" value="TreeGrafter"/>
</dbReference>
<dbReference type="GO" id="GO:0006450">
    <property type="term" value="P:regulation of translational fidelity"/>
    <property type="evidence" value="ECO:0007669"/>
    <property type="project" value="InterPro"/>
</dbReference>
<dbReference type="GO" id="GO:0006412">
    <property type="term" value="P:translation"/>
    <property type="evidence" value="ECO:0007669"/>
    <property type="project" value="UniProtKB-UniRule"/>
</dbReference>
<dbReference type="Gene3D" id="1.10.20.60">
    <property type="entry name" value="Glu-tRNAGln amidotransferase C subunit, N-terminal domain"/>
    <property type="match status" value="1"/>
</dbReference>
<dbReference type="HAMAP" id="MF_00122">
    <property type="entry name" value="GatC"/>
    <property type="match status" value="1"/>
</dbReference>
<dbReference type="InterPro" id="IPR036113">
    <property type="entry name" value="Asp/Glu-ADT_sf_sub_c"/>
</dbReference>
<dbReference type="InterPro" id="IPR003837">
    <property type="entry name" value="GatC"/>
</dbReference>
<dbReference type="NCBIfam" id="TIGR00135">
    <property type="entry name" value="gatC"/>
    <property type="match status" value="1"/>
</dbReference>
<dbReference type="PANTHER" id="PTHR15004">
    <property type="entry name" value="GLUTAMYL-TRNA(GLN) AMIDOTRANSFERASE SUBUNIT C, MITOCHONDRIAL"/>
    <property type="match status" value="1"/>
</dbReference>
<dbReference type="PANTHER" id="PTHR15004:SF0">
    <property type="entry name" value="GLUTAMYL-TRNA(GLN) AMIDOTRANSFERASE SUBUNIT C, MITOCHONDRIAL"/>
    <property type="match status" value="1"/>
</dbReference>
<dbReference type="Pfam" id="PF02686">
    <property type="entry name" value="GatC"/>
    <property type="match status" value="1"/>
</dbReference>
<dbReference type="SUPFAM" id="SSF141000">
    <property type="entry name" value="Glu-tRNAGln amidotransferase C subunit"/>
    <property type="match status" value="1"/>
</dbReference>
<proteinExistence type="inferred from homology"/>
<name>GATC_STRU0</name>
<protein>
    <recommendedName>
        <fullName evidence="1">Aspartyl/glutamyl-tRNA(Asn/Gln) amidotransferase subunit C</fullName>
        <shortName evidence="1">Asp/Glu-ADT subunit C</shortName>
        <ecNumber evidence="1">6.3.5.-</ecNumber>
    </recommendedName>
</protein>
<reference key="1">
    <citation type="journal article" date="2009" name="BMC Genomics">
        <title>Evidence for niche adaptation in the genome of the bovine pathogen Streptococcus uberis.</title>
        <authorList>
            <person name="Ward P.N."/>
            <person name="Holden M.T.G."/>
            <person name="Leigh J.A."/>
            <person name="Lennard N."/>
            <person name="Bignell A."/>
            <person name="Barron A."/>
            <person name="Clark L."/>
            <person name="Quail M.A."/>
            <person name="Woodward J."/>
            <person name="Barrell B.G."/>
            <person name="Egan S.A."/>
            <person name="Field T.R."/>
            <person name="Maskell D."/>
            <person name="Kehoe M."/>
            <person name="Dowson C.G."/>
            <person name="Chanter N."/>
            <person name="Whatmore A.M."/>
            <person name="Bentley S.D."/>
            <person name="Parkhill J."/>
        </authorList>
    </citation>
    <scope>NUCLEOTIDE SEQUENCE [LARGE SCALE GENOMIC DNA]</scope>
    <source>
        <strain>ATCC BAA-854 / 0140J</strain>
    </source>
</reference>
<keyword id="KW-0067">ATP-binding</keyword>
<keyword id="KW-0436">Ligase</keyword>
<keyword id="KW-0547">Nucleotide-binding</keyword>
<keyword id="KW-0648">Protein biosynthesis</keyword>
<keyword id="KW-1185">Reference proteome</keyword>
<organism>
    <name type="scientific">Streptococcus uberis (strain ATCC BAA-854 / 0140J)</name>
    <dbReference type="NCBI Taxonomy" id="218495"/>
    <lineage>
        <taxon>Bacteria</taxon>
        <taxon>Bacillati</taxon>
        <taxon>Bacillota</taxon>
        <taxon>Bacilli</taxon>
        <taxon>Lactobacillales</taxon>
        <taxon>Streptococcaceae</taxon>
        <taxon>Streptococcus</taxon>
    </lineage>
</organism>
<feature type="chain" id="PRO_1000122586" description="Aspartyl/glutamyl-tRNA(Asn/Gln) amidotransferase subunit C">
    <location>
        <begin position="1"/>
        <end position="100"/>
    </location>
</feature>